<name>BGL21_ARATH</name>
<keyword id="KW-0025">Alternative splicing</keyword>
<keyword id="KW-1015">Disulfide bond</keyword>
<keyword id="KW-0256">Endoplasmic reticulum</keyword>
<keyword id="KW-0325">Glycoprotein</keyword>
<keyword id="KW-0326">Glycosidase</keyword>
<keyword id="KW-0378">Hydrolase</keyword>
<keyword id="KW-1185">Reference proteome</keyword>
<keyword id="KW-0732">Signal</keyword>
<reference key="1">
    <citation type="journal article" date="1997" name="Plant Mol. Biol.">
        <title>A phosphate-starvation inducible beta-glucosidase gene (psr3.2) isolated from Arabidopsis thaliana is a member of a distinct subfamily of the BGA family.</title>
        <authorList>
            <person name="Malboobi M.A."/>
            <person name="Lefebvre D.D."/>
        </authorList>
    </citation>
    <scope>NUCLEOTIDE SEQUENCE [GENOMIC DNA]</scope>
    <scope>INDUCTION</scope>
    <source>
        <strain>cv. Columbia</strain>
    </source>
</reference>
<reference key="2">
    <citation type="journal article" date="2000" name="Nature">
        <title>Sequence and analysis of chromosome 1 of the plant Arabidopsis thaliana.</title>
        <authorList>
            <person name="Theologis A."/>
            <person name="Ecker J.R."/>
            <person name="Palm C.J."/>
            <person name="Federspiel N.A."/>
            <person name="Kaul S."/>
            <person name="White O."/>
            <person name="Alonso J."/>
            <person name="Altafi H."/>
            <person name="Araujo R."/>
            <person name="Bowman C.L."/>
            <person name="Brooks S.Y."/>
            <person name="Buehler E."/>
            <person name="Chan A."/>
            <person name="Chao Q."/>
            <person name="Chen H."/>
            <person name="Cheuk R.F."/>
            <person name="Chin C.W."/>
            <person name="Chung M.K."/>
            <person name="Conn L."/>
            <person name="Conway A.B."/>
            <person name="Conway A.R."/>
            <person name="Creasy T.H."/>
            <person name="Dewar K."/>
            <person name="Dunn P."/>
            <person name="Etgu P."/>
            <person name="Feldblyum T.V."/>
            <person name="Feng J.-D."/>
            <person name="Fong B."/>
            <person name="Fujii C.Y."/>
            <person name="Gill J.E."/>
            <person name="Goldsmith A.D."/>
            <person name="Haas B."/>
            <person name="Hansen N.F."/>
            <person name="Hughes B."/>
            <person name="Huizar L."/>
            <person name="Hunter J.L."/>
            <person name="Jenkins J."/>
            <person name="Johnson-Hopson C."/>
            <person name="Khan S."/>
            <person name="Khaykin E."/>
            <person name="Kim C.J."/>
            <person name="Koo H.L."/>
            <person name="Kremenetskaia I."/>
            <person name="Kurtz D.B."/>
            <person name="Kwan A."/>
            <person name="Lam B."/>
            <person name="Langin-Hooper S."/>
            <person name="Lee A."/>
            <person name="Lee J.M."/>
            <person name="Lenz C.A."/>
            <person name="Li J.H."/>
            <person name="Li Y.-P."/>
            <person name="Lin X."/>
            <person name="Liu S.X."/>
            <person name="Liu Z.A."/>
            <person name="Luros J.S."/>
            <person name="Maiti R."/>
            <person name="Marziali A."/>
            <person name="Militscher J."/>
            <person name="Miranda M."/>
            <person name="Nguyen M."/>
            <person name="Nierman W.C."/>
            <person name="Osborne B.I."/>
            <person name="Pai G."/>
            <person name="Peterson J."/>
            <person name="Pham P.K."/>
            <person name="Rizzo M."/>
            <person name="Rooney T."/>
            <person name="Rowley D."/>
            <person name="Sakano H."/>
            <person name="Salzberg S.L."/>
            <person name="Schwartz J.R."/>
            <person name="Shinn P."/>
            <person name="Southwick A.M."/>
            <person name="Sun H."/>
            <person name="Tallon L.J."/>
            <person name="Tambunga G."/>
            <person name="Toriumi M.J."/>
            <person name="Town C.D."/>
            <person name="Utterback T."/>
            <person name="Van Aken S."/>
            <person name="Vaysberg M."/>
            <person name="Vysotskaia V.S."/>
            <person name="Walker M."/>
            <person name="Wu D."/>
            <person name="Yu G."/>
            <person name="Fraser C.M."/>
            <person name="Venter J.C."/>
            <person name="Davis R.W."/>
        </authorList>
    </citation>
    <scope>NUCLEOTIDE SEQUENCE [LARGE SCALE GENOMIC DNA]</scope>
    <source>
        <strain>cv. Columbia</strain>
    </source>
</reference>
<reference key="3">
    <citation type="journal article" date="2017" name="Plant J.">
        <title>Araport11: a complete reannotation of the Arabidopsis thaliana reference genome.</title>
        <authorList>
            <person name="Cheng C.Y."/>
            <person name="Krishnakumar V."/>
            <person name="Chan A.P."/>
            <person name="Thibaud-Nissen F."/>
            <person name="Schobel S."/>
            <person name="Town C.D."/>
        </authorList>
    </citation>
    <scope>GENOME REANNOTATION</scope>
    <source>
        <strain>cv. Columbia</strain>
    </source>
</reference>
<reference key="4">
    <citation type="journal article" date="2003" name="Science">
        <title>Empirical analysis of transcriptional activity in the Arabidopsis genome.</title>
        <authorList>
            <person name="Yamada K."/>
            <person name="Lim J."/>
            <person name="Dale J.M."/>
            <person name="Chen H."/>
            <person name="Shinn P."/>
            <person name="Palm C.J."/>
            <person name="Southwick A.M."/>
            <person name="Wu H.C."/>
            <person name="Kim C.J."/>
            <person name="Nguyen M."/>
            <person name="Pham P.K."/>
            <person name="Cheuk R.F."/>
            <person name="Karlin-Newmann G."/>
            <person name="Liu S.X."/>
            <person name="Lam B."/>
            <person name="Sakano H."/>
            <person name="Wu T."/>
            <person name="Yu G."/>
            <person name="Miranda M."/>
            <person name="Quach H.L."/>
            <person name="Tripp M."/>
            <person name="Chang C.H."/>
            <person name="Lee J.M."/>
            <person name="Toriumi M.J."/>
            <person name="Chan M.M."/>
            <person name="Tang C.C."/>
            <person name="Onodera C.S."/>
            <person name="Deng J.M."/>
            <person name="Akiyama K."/>
            <person name="Ansari Y."/>
            <person name="Arakawa T."/>
            <person name="Banh J."/>
            <person name="Banno F."/>
            <person name="Bowser L."/>
            <person name="Brooks S.Y."/>
            <person name="Carninci P."/>
            <person name="Chao Q."/>
            <person name="Choy N."/>
            <person name="Enju A."/>
            <person name="Goldsmith A.D."/>
            <person name="Gurjal M."/>
            <person name="Hansen N.F."/>
            <person name="Hayashizaki Y."/>
            <person name="Johnson-Hopson C."/>
            <person name="Hsuan V.W."/>
            <person name="Iida K."/>
            <person name="Karnes M."/>
            <person name="Khan S."/>
            <person name="Koesema E."/>
            <person name="Ishida J."/>
            <person name="Jiang P.X."/>
            <person name="Jones T."/>
            <person name="Kawai J."/>
            <person name="Kamiya A."/>
            <person name="Meyers C."/>
            <person name="Nakajima M."/>
            <person name="Narusaka M."/>
            <person name="Seki M."/>
            <person name="Sakurai T."/>
            <person name="Satou M."/>
            <person name="Tamse R."/>
            <person name="Vaysberg M."/>
            <person name="Wallender E.K."/>
            <person name="Wong C."/>
            <person name="Yamamura Y."/>
            <person name="Yuan S."/>
            <person name="Shinozaki K."/>
            <person name="Davis R.W."/>
            <person name="Theologis A."/>
            <person name="Ecker J.R."/>
        </authorList>
    </citation>
    <scope>NUCLEOTIDE SEQUENCE [LARGE SCALE MRNA] (ISOFORM 1)</scope>
    <source>
        <strain>cv. Columbia</strain>
    </source>
</reference>
<reference key="5">
    <citation type="journal article" date="2004" name="Plant Mol. Biol.">
        <title>Functional genomic analysis of Arabidopsis thaliana glycoside hydrolase family 1.</title>
        <authorList>
            <person name="Xu Z."/>
            <person name="Escamilla-Trevino L.L."/>
            <person name="Zeng L."/>
            <person name="Lalgondar M."/>
            <person name="Bevan D.R."/>
            <person name="Winkel B.S.J."/>
            <person name="Mohamed A."/>
            <person name="Cheng C.-L."/>
            <person name="Shih M.-C."/>
            <person name="Poulton J.E."/>
            <person name="Esen A."/>
        </authorList>
    </citation>
    <scope>GENE FAMILY</scope>
    <scope>NOMENCLATURE</scope>
</reference>
<reference key="6">
    <citation type="journal article" date="2008" name="Plant Cell Physiol.">
        <title>Antagonistic jacalin-related lectins regulate the size of ER body-type beta-glucosidase complexes in Arabidopsis thaliana.</title>
        <authorList>
            <person name="Nagano A.J."/>
            <person name="Fukao Y."/>
            <person name="Fujiwara M."/>
            <person name="Nishimura M."/>
            <person name="Hara-Nishimura I."/>
        </authorList>
    </citation>
    <scope>IDENTIFICATION IN THE PYK10 COMPLEX</scope>
</reference>
<reference key="7">
    <citation type="journal article" date="2010" name="Plant Cell Physiol.">
        <title>Scopolin-hydrolyzing beta-glucosidases in roots of Arabidopsis.</title>
        <authorList>
            <person name="Ahn Y.O."/>
            <person name="Shimizu B."/>
            <person name="Sakata K."/>
            <person name="Gantulga D."/>
            <person name="Zhou C."/>
            <person name="Zhou Z."/>
            <person name="Bevan D.R."/>
            <person name="Esen A."/>
        </authorList>
    </citation>
    <scope>FUNCTION</scope>
    <scope>CATALYTIC ACTIVITY</scope>
    <scope>ACTIVITY REGULATION</scope>
    <scope>TISSUE SPECIFICITY</scope>
    <scope>INDUCTION</scope>
</reference>
<dbReference type="EC" id="3.2.1.21" evidence="8"/>
<dbReference type="EMBL" id="U72155">
    <property type="protein sequence ID" value="AAB64244.1"/>
    <property type="status" value="ALT_SEQ"/>
    <property type="molecule type" value="Genomic_DNA"/>
</dbReference>
<dbReference type="EMBL" id="AC020665">
    <property type="protein sequence ID" value="AAG52157.1"/>
    <property type="molecule type" value="Genomic_DNA"/>
</dbReference>
<dbReference type="EMBL" id="AC066691">
    <property type="protein sequence ID" value="AAG51761.1"/>
    <property type="molecule type" value="Genomic_DNA"/>
</dbReference>
<dbReference type="EMBL" id="CP002684">
    <property type="protein sequence ID" value="AEE34488.1"/>
    <property type="molecule type" value="Genomic_DNA"/>
</dbReference>
<dbReference type="EMBL" id="CP002684">
    <property type="protein sequence ID" value="AEE34489.1"/>
    <property type="molecule type" value="Genomic_DNA"/>
</dbReference>
<dbReference type="EMBL" id="AY045698">
    <property type="protein sequence ID" value="AAK74056.1"/>
    <property type="molecule type" value="mRNA"/>
</dbReference>
<dbReference type="EMBL" id="BT002684">
    <property type="protein sequence ID" value="AAO11600.1"/>
    <property type="molecule type" value="mRNA"/>
</dbReference>
<dbReference type="PIR" id="G96687">
    <property type="entry name" value="G96687"/>
</dbReference>
<dbReference type="RefSeq" id="NP_176801.1">
    <molecule id="Q9C525-1"/>
    <property type="nucleotide sequence ID" value="NM_105298.4"/>
</dbReference>
<dbReference type="RefSeq" id="NP_849848.1">
    <molecule id="Q9C525-2"/>
    <property type="nucleotide sequence ID" value="NM_179517.2"/>
</dbReference>
<dbReference type="SMR" id="Q9C525"/>
<dbReference type="BioGRID" id="28165">
    <property type="interactions" value="2"/>
</dbReference>
<dbReference type="FunCoup" id="Q9C525">
    <property type="interactions" value="264"/>
</dbReference>
<dbReference type="IntAct" id="Q9C525">
    <property type="interactions" value="1"/>
</dbReference>
<dbReference type="STRING" id="3702.Q9C525"/>
<dbReference type="CAZy" id="GH1">
    <property type="family name" value="Glycoside Hydrolase Family 1"/>
</dbReference>
<dbReference type="GlyCosmos" id="Q9C525">
    <property type="glycosylation" value="2 sites, No reported glycans"/>
</dbReference>
<dbReference type="GlyGen" id="Q9C525">
    <property type="glycosylation" value="2 sites"/>
</dbReference>
<dbReference type="MetOSite" id="Q9C525"/>
<dbReference type="PaxDb" id="3702-AT1G66270.1"/>
<dbReference type="ProteomicsDB" id="240868">
    <molecule id="Q9C525-1"/>
</dbReference>
<dbReference type="EnsemblPlants" id="AT1G66270.1">
    <molecule id="Q9C525-1"/>
    <property type="protein sequence ID" value="AT1G66270.1"/>
    <property type="gene ID" value="AT1G66270"/>
</dbReference>
<dbReference type="EnsemblPlants" id="AT1G66270.2">
    <molecule id="Q9C525-2"/>
    <property type="protein sequence ID" value="AT1G66270.2"/>
    <property type="gene ID" value="AT1G66270"/>
</dbReference>
<dbReference type="GeneID" id="842944"/>
<dbReference type="Gramene" id="AT1G66270.1">
    <molecule id="Q9C525-1"/>
    <property type="protein sequence ID" value="AT1G66270.1"/>
    <property type="gene ID" value="AT1G66270"/>
</dbReference>
<dbReference type="Gramene" id="AT1G66270.2">
    <molecule id="Q9C525-2"/>
    <property type="protein sequence ID" value="AT1G66270.2"/>
    <property type="gene ID" value="AT1G66270"/>
</dbReference>
<dbReference type="KEGG" id="ath:AT1G66270"/>
<dbReference type="Araport" id="AT1G66270"/>
<dbReference type="TAIR" id="AT1G66270">
    <property type="gene designation" value="BGLU21"/>
</dbReference>
<dbReference type="eggNOG" id="KOG0626">
    <property type="taxonomic scope" value="Eukaryota"/>
</dbReference>
<dbReference type="HOGENOM" id="CLU_001859_1_0_1"/>
<dbReference type="InParanoid" id="Q9C525"/>
<dbReference type="OMA" id="YANPNIV"/>
<dbReference type="OrthoDB" id="65569at2759"/>
<dbReference type="PhylomeDB" id="Q9C525"/>
<dbReference type="BioCyc" id="ARA:AT1G66270-MONOMER"/>
<dbReference type="BRENDA" id="3.2.1.21">
    <property type="organism ID" value="399"/>
</dbReference>
<dbReference type="PRO" id="PR:Q9C525"/>
<dbReference type="Proteomes" id="UP000006548">
    <property type="component" value="Chromosome 1"/>
</dbReference>
<dbReference type="ExpressionAtlas" id="Q9C525">
    <property type="expression patterns" value="baseline and differential"/>
</dbReference>
<dbReference type="GO" id="GO:0005783">
    <property type="term" value="C:endoplasmic reticulum"/>
    <property type="evidence" value="ECO:0007005"/>
    <property type="project" value="TAIR"/>
</dbReference>
<dbReference type="GO" id="GO:0005788">
    <property type="term" value="C:endoplasmic reticulum lumen"/>
    <property type="evidence" value="ECO:0007669"/>
    <property type="project" value="UniProtKB-SubCell"/>
</dbReference>
<dbReference type="GO" id="GO:0005739">
    <property type="term" value="C:mitochondrion"/>
    <property type="evidence" value="ECO:0007005"/>
    <property type="project" value="TAIR"/>
</dbReference>
<dbReference type="GO" id="GO:0000325">
    <property type="term" value="C:plant-type vacuole"/>
    <property type="evidence" value="ECO:0007005"/>
    <property type="project" value="TAIR"/>
</dbReference>
<dbReference type="GO" id="GO:0009506">
    <property type="term" value="C:plasmodesma"/>
    <property type="evidence" value="ECO:0007005"/>
    <property type="project" value="TAIR"/>
</dbReference>
<dbReference type="GO" id="GO:0008422">
    <property type="term" value="F:beta-glucosidase activity"/>
    <property type="evidence" value="ECO:0000314"/>
    <property type="project" value="TAIR"/>
</dbReference>
<dbReference type="GO" id="GO:0005975">
    <property type="term" value="P:carbohydrate metabolic process"/>
    <property type="evidence" value="ECO:0007669"/>
    <property type="project" value="InterPro"/>
</dbReference>
<dbReference type="GO" id="GO:0070417">
    <property type="term" value="P:cellular response to cold"/>
    <property type="evidence" value="ECO:0000270"/>
    <property type="project" value="TAIR"/>
</dbReference>
<dbReference type="GO" id="GO:0016036">
    <property type="term" value="P:cellular response to phosphate starvation"/>
    <property type="evidence" value="ECO:0000270"/>
    <property type="project" value="UniProtKB"/>
</dbReference>
<dbReference type="GO" id="GO:0071472">
    <property type="term" value="P:cellular response to salt stress"/>
    <property type="evidence" value="ECO:0000270"/>
    <property type="project" value="TAIR"/>
</dbReference>
<dbReference type="GO" id="GO:0009804">
    <property type="term" value="P:coumarin metabolic process"/>
    <property type="evidence" value="ECO:0000314"/>
    <property type="project" value="TAIR"/>
</dbReference>
<dbReference type="GO" id="GO:0006970">
    <property type="term" value="P:response to osmotic stress"/>
    <property type="evidence" value="ECO:0000270"/>
    <property type="project" value="TAIR"/>
</dbReference>
<dbReference type="FunFam" id="3.20.20.80:FF:000022">
    <property type="entry name" value="Beta-glucosidase 11"/>
    <property type="match status" value="1"/>
</dbReference>
<dbReference type="Gene3D" id="3.20.20.80">
    <property type="entry name" value="Glycosidases"/>
    <property type="match status" value="1"/>
</dbReference>
<dbReference type="InterPro" id="IPR001360">
    <property type="entry name" value="Glyco_hydro_1"/>
</dbReference>
<dbReference type="InterPro" id="IPR033132">
    <property type="entry name" value="Glyco_hydro_1_N_CS"/>
</dbReference>
<dbReference type="InterPro" id="IPR017853">
    <property type="entry name" value="Glycoside_hydrolase_SF"/>
</dbReference>
<dbReference type="PANTHER" id="PTHR10353:SF266">
    <property type="entry name" value="BETA-GLUCOSIDASE 21-RELATED"/>
    <property type="match status" value="1"/>
</dbReference>
<dbReference type="PANTHER" id="PTHR10353">
    <property type="entry name" value="GLYCOSYL HYDROLASE"/>
    <property type="match status" value="1"/>
</dbReference>
<dbReference type="Pfam" id="PF00232">
    <property type="entry name" value="Glyco_hydro_1"/>
    <property type="match status" value="1"/>
</dbReference>
<dbReference type="PRINTS" id="PR00131">
    <property type="entry name" value="GLHYDRLASE1"/>
</dbReference>
<dbReference type="SUPFAM" id="SSF51445">
    <property type="entry name" value="(Trans)glycosidases"/>
    <property type="match status" value="1"/>
</dbReference>
<dbReference type="PROSITE" id="PS00014">
    <property type="entry name" value="ER_TARGET"/>
    <property type="match status" value="1"/>
</dbReference>
<dbReference type="PROSITE" id="PS00653">
    <property type="entry name" value="GLYCOSYL_HYDROL_F1_2"/>
    <property type="match status" value="1"/>
</dbReference>
<comment type="function">
    <text evidence="8">Beta-D-glucosidase active on scopolin &gt;&gt; esculin &gt;&gt; 4-MU-glucoside &gt; DIMBOA-glucoside. No activity with pNP-glucoside, oNP-glucoside and sinigrin as substrates.</text>
</comment>
<comment type="catalytic activity">
    <reaction evidence="8">
        <text>Hydrolysis of terminal, non-reducing beta-D-glucosyl residues with release of beta-D-glucose.</text>
        <dbReference type="EC" id="3.2.1.21"/>
    </reaction>
</comment>
<comment type="activity regulation">
    <text evidence="8">Activated upon binding to PBP1 or PBP2.</text>
</comment>
<comment type="subunit">
    <text evidence="7">Component of the PYK10 complex, at least composed of PYK10/BGLU23, BGLU21, BGLU22, JAL22, JAL23, PBP1/JAL30, PBP2/JAL31, JAL32, JAL33, JAL34, JAL35, GLL22 and GLL23.</text>
</comment>
<comment type="subcellular location">
    <subcellularLocation>
        <location evidence="6">Endoplasmic reticulum lumen</location>
    </subcellularLocation>
</comment>
<comment type="alternative products">
    <event type="alternative splicing"/>
    <isoform>
        <id>Q9C525-1</id>
        <name>1</name>
        <sequence type="displayed"/>
    </isoform>
    <isoform>
        <id>Q9C525-2</id>
        <name>2</name>
        <sequence type="described" ref="VSP_038457"/>
    </isoform>
</comment>
<comment type="tissue specificity">
    <text evidence="8">Expressed exclusively in roots.</text>
</comment>
<comment type="induction">
    <text evidence="8 9">Up-regulated by cold, 2,4-D, methyl jasmonate and phosphate starvation.</text>
</comment>
<comment type="miscellaneous">
    <molecule>Isoform 2</molecule>
    <text evidence="12">May be due to a competing acceptor splice site.</text>
</comment>
<comment type="similarity">
    <text evidence="12">Belongs to the glycosyl hydrolase 1 family.</text>
</comment>
<comment type="sequence caution" evidence="12">
    <conflict type="erroneous gene model prediction">
        <sequence resource="EMBL-CDS" id="AAB64244"/>
    </conflict>
</comment>
<evidence type="ECO:0000250" key="1">
    <source>
        <dbReference type="UniProtKB" id="Q1XH05"/>
    </source>
</evidence>
<evidence type="ECO:0000250" key="2">
    <source>
        <dbReference type="UniProtKB" id="Q7XSK0"/>
    </source>
</evidence>
<evidence type="ECO:0000250" key="3">
    <source>
        <dbReference type="UniProtKB" id="Q9SPP9"/>
    </source>
</evidence>
<evidence type="ECO:0000255" key="4"/>
<evidence type="ECO:0000255" key="5">
    <source>
        <dbReference type="PROSITE-ProRule" id="PRU00498"/>
    </source>
</evidence>
<evidence type="ECO:0000255" key="6">
    <source>
        <dbReference type="PROSITE-ProRule" id="PRU10138"/>
    </source>
</evidence>
<evidence type="ECO:0000269" key="7">
    <source>
    </source>
</evidence>
<evidence type="ECO:0000269" key="8">
    <source>
    </source>
</evidence>
<evidence type="ECO:0000269" key="9">
    <source>
    </source>
</evidence>
<evidence type="ECO:0000303" key="10">
    <source>
    </source>
</evidence>
<evidence type="ECO:0000303" key="11">
    <source>
    </source>
</evidence>
<evidence type="ECO:0000305" key="12"/>
<evidence type="ECO:0000312" key="13">
    <source>
        <dbReference type="Araport" id="AT1G66270"/>
    </source>
</evidence>
<evidence type="ECO:0000312" key="14">
    <source>
        <dbReference type="EMBL" id="AAG51761.1"/>
    </source>
</evidence>
<evidence type="ECO:0000312" key="15">
    <source>
        <dbReference type="EMBL" id="AAG52157.1"/>
    </source>
</evidence>
<gene>
    <name evidence="10" type="primary">BGLU21</name>
    <name evidence="11" type="synonym">PSR3.2</name>
    <name evidence="13" type="ordered locus">At1g66270</name>
    <name evidence="15" type="ORF">T27F4.2</name>
    <name evidence="14" type="ORF">T6J19.2</name>
</gene>
<proteinExistence type="evidence at protein level"/>
<sequence>MALQKFPLMGLLLLLTILVSVTTAVDDPVCPATSKLSRASFPNGFLFGTATAAFQVEGAINETCRGPALWDIYCRRNPERCSGDHADVAVDFFHRYKEDIQLMKNLNTDAFRLSIAWSRIFPHGRKEKGVSQAGVQFYHELIDELLKNGIVPFVTVFHWDTPQDLEDEYGGFLSQNIVKDFREYADYVFTEYGGKVKNWITFNEPWVFAHAGYDLGKKAPGRCSRYVPGCEDREGQSGKEAYLVSHNLLNAHAEAVEVFRQKVKGGKIGIAHSPAWFEPHDLKDSNDAPTVSRVLDFMLGWHLEPTTSGDYPQIMKDLLGYRLPQFTAAQKAKLKDSTDFVGLNYYTSTFSNYNEKPDPSKPSWKQDSLVSWEPKNVDHSAIGSMPLTAALPVYAKGFRKLLKYIKDKYANPEIMIMENGYGDKLGTTDSVDVGTADHNRKYYLQRHLLAMNEAICIDKVRVTGYFVWSLLDNFEWQDGYKNRFGLYYVDFKNNLTRYEKESAKYYKDFLAQGVRPSALKRDEL</sequence>
<organism>
    <name type="scientific">Arabidopsis thaliana</name>
    <name type="common">Mouse-ear cress</name>
    <dbReference type="NCBI Taxonomy" id="3702"/>
    <lineage>
        <taxon>Eukaryota</taxon>
        <taxon>Viridiplantae</taxon>
        <taxon>Streptophyta</taxon>
        <taxon>Embryophyta</taxon>
        <taxon>Tracheophyta</taxon>
        <taxon>Spermatophyta</taxon>
        <taxon>Magnoliopsida</taxon>
        <taxon>eudicotyledons</taxon>
        <taxon>Gunneridae</taxon>
        <taxon>Pentapetalae</taxon>
        <taxon>rosids</taxon>
        <taxon>malvids</taxon>
        <taxon>Brassicales</taxon>
        <taxon>Brassicaceae</taxon>
        <taxon>Camelineae</taxon>
        <taxon>Arabidopsis</taxon>
    </lineage>
</organism>
<protein>
    <recommendedName>
        <fullName evidence="10">Beta-glucosidase 21</fullName>
        <shortName evidence="10">AtBGLU21</shortName>
        <ecNumber evidence="8">3.2.1.21</ecNumber>
    </recommendedName>
    <alternativeName>
        <fullName evidence="11">Protein PHOSPHATE STARVATION-RESPONSE 3.2</fullName>
    </alternativeName>
</protein>
<feature type="signal peptide" evidence="4">
    <location>
        <begin position="1"/>
        <end position="24"/>
    </location>
</feature>
<feature type="chain" id="PRO_0000389583" description="Beta-glucosidase 21">
    <location>
        <begin position="25"/>
        <end position="524"/>
    </location>
</feature>
<feature type="short sequence motif" description="Prevents secretion from ER" evidence="6">
    <location>
        <begin position="521"/>
        <end position="524"/>
    </location>
</feature>
<feature type="active site" description="Proton donor" evidence="2">
    <location>
        <position position="204"/>
    </location>
</feature>
<feature type="active site" description="Nucleophile" evidence="2">
    <location>
        <position position="418"/>
    </location>
</feature>
<feature type="binding site" evidence="2">
    <location>
        <position position="55"/>
    </location>
    <ligand>
        <name>a beta-D-glucoside</name>
        <dbReference type="ChEBI" id="CHEBI:22798"/>
    </ligand>
</feature>
<feature type="binding site" evidence="2">
    <location>
        <position position="158"/>
    </location>
    <ligand>
        <name>a beta-D-glucoside</name>
        <dbReference type="ChEBI" id="CHEBI:22798"/>
    </ligand>
</feature>
<feature type="binding site" evidence="2">
    <location>
        <begin position="203"/>
        <end position="204"/>
    </location>
    <ligand>
        <name>a beta-D-glucoside</name>
        <dbReference type="ChEBI" id="CHEBI:22798"/>
    </ligand>
</feature>
<feature type="binding site" evidence="2">
    <location>
        <position position="346"/>
    </location>
    <ligand>
        <name>a beta-D-glucoside</name>
        <dbReference type="ChEBI" id="CHEBI:22798"/>
    </ligand>
</feature>
<feature type="binding site" evidence="3">
    <location>
        <position position="418"/>
    </location>
    <ligand>
        <name>a beta-D-glucoside</name>
        <dbReference type="ChEBI" id="CHEBI:22798"/>
    </ligand>
</feature>
<feature type="binding site" evidence="2">
    <location>
        <position position="468"/>
    </location>
    <ligand>
        <name>a beta-D-glucoside</name>
        <dbReference type="ChEBI" id="CHEBI:22798"/>
    </ligand>
</feature>
<feature type="binding site" evidence="2">
    <location>
        <begin position="475"/>
        <end position="476"/>
    </location>
    <ligand>
        <name>a beta-D-glucoside</name>
        <dbReference type="ChEBI" id="CHEBI:22798"/>
    </ligand>
</feature>
<feature type="binding site" evidence="1">
    <location>
        <position position="484"/>
    </location>
    <ligand>
        <name>a beta-D-glucoside</name>
        <dbReference type="ChEBI" id="CHEBI:22798"/>
    </ligand>
</feature>
<feature type="glycosylation site" description="N-linked (GlcNAc...) asparagine" evidence="5">
    <location>
        <position position="61"/>
    </location>
</feature>
<feature type="glycosylation site" description="N-linked (GlcNAc...) asparagine" evidence="5">
    <location>
        <position position="494"/>
    </location>
</feature>
<feature type="disulfide bond" evidence="2">
    <location>
        <begin position="223"/>
        <end position="230"/>
    </location>
</feature>
<feature type="splice variant" id="VSP_038457" description="In isoform 2." evidence="12">
    <location>
        <begin position="149"/>
        <end position="150"/>
    </location>
</feature>
<accession>Q9C525</accession>
<accession>O23656</accession>
<accession>Q3ECH6</accession>